<dbReference type="EC" id="2.3.1.234" evidence="1"/>
<dbReference type="EMBL" id="CP001138">
    <property type="protein sequence ID" value="ACH49290.1"/>
    <property type="molecule type" value="Genomic_DNA"/>
</dbReference>
<dbReference type="RefSeq" id="WP_001264394.1">
    <property type="nucleotide sequence ID" value="NC_011149.1"/>
</dbReference>
<dbReference type="SMR" id="B5F6A4"/>
<dbReference type="KEGG" id="sea:SeAg_B3394"/>
<dbReference type="HOGENOM" id="CLU_023208_0_0_6"/>
<dbReference type="Proteomes" id="UP000008819">
    <property type="component" value="Chromosome"/>
</dbReference>
<dbReference type="GO" id="GO:0005737">
    <property type="term" value="C:cytoplasm"/>
    <property type="evidence" value="ECO:0007669"/>
    <property type="project" value="UniProtKB-SubCell"/>
</dbReference>
<dbReference type="GO" id="GO:0005506">
    <property type="term" value="F:iron ion binding"/>
    <property type="evidence" value="ECO:0007669"/>
    <property type="project" value="UniProtKB-UniRule"/>
</dbReference>
<dbReference type="GO" id="GO:0061711">
    <property type="term" value="F:N(6)-L-threonylcarbamoyladenine synthase activity"/>
    <property type="evidence" value="ECO:0007669"/>
    <property type="project" value="UniProtKB-EC"/>
</dbReference>
<dbReference type="GO" id="GO:0002949">
    <property type="term" value="P:tRNA threonylcarbamoyladenosine modification"/>
    <property type="evidence" value="ECO:0007669"/>
    <property type="project" value="UniProtKB-UniRule"/>
</dbReference>
<dbReference type="CDD" id="cd24097">
    <property type="entry name" value="ASKHA_NBD_TsaD-like"/>
    <property type="match status" value="1"/>
</dbReference>
<dbReference type="FunFam" id="3.30.420.40:FF:000031">
    <property type="entry name" value="tRNA N6-adenosine threonylcarbamoyltransferase"/>
    <property type="match status" value="1"/>
</dbReference>
<dbReference type="Gene3D" id="3.30.420.40">
    <property type="match status" value="2"/>
</dbReference>
<dbReference type="HAMAP" id="MF_01445">
    <property type="entry name" value="TsaD"/>
    <property type="match status" value="1"/>
</dbReference>
<dbReference type="InterPro" id="IPR043129">
    <property type="entry name" value="ATPase_NBD"/>
</dbReference>
<dbReference type="InterPro" id="IPR000905">
    <property type="entry name" value="Gcp-like_dom"/>
</dbReference>
<dbReference type="InterPro" id="IPR017861">
    <property type="entry name" value="KAE1/TsaD"/>
</dbReference>
<dbReference type="InterPro" id="IPR017860">
    <property type="entry name" value="Peptidase_M22_CS"/>
</dbReference>
<dbReference type="InterPro" id="IPR022450">
    <property type="entry name" value="TsaD"/>
</dbReference>
<dbReference type="NCBIfam" id="TIGR00329">
    <property type="entry name" value="gcp_kae1"/>
    <property type="match status" value="1"/>
</dbReference>
<dbReference type="NCBIfam" id="TIGR03723">
    <property type="entry name" value="T6A_TsaD_YgjD"/>
    <property type="match status" value="1"/>
</dbReference>
<dbReference type="PANTHER" id="PTHR11735">
    <property type="entry name" value="TRNA N6-ADENOSINE THREONYLCARBAMOYLTRANSFERASE"/>
    <property type="match status" value="1"/>
</dbReference>
<dbReference type="PANTHER" id="PTHR11735:SF6">
    <property type="entry name" value="TRNA N6-ADENOSINE THREONYLCARBAMOYLTRANSFERASE, MITOCHONDRIAL"/>
    <property type="match status" value="1"/>
</dbReference>
<dbReference type="Pfam" id="PF00814">
    <property type="entry name" value="TsaD"/>
    <property type="match status" value="1"/>
</dbReference>
<dbReference type="PRINTS" id="PR00789">
    <property type="entry name" value="OSIALOPTASE"/>
</dbReference>
<dbReference type="SUPFAM" id="SSF53067">
    <property type="entry name" value="Actin-like ATPase domain"/>
    <property type="match status" value="1"/>
</dbReference>
<dbReference type="PROSITE" id="PS01016">
    <property type="entry name" value="GLYCOPROTEASE"/>
    <property type="match status" value="1"/>
</dbReference>
<proteinExistence type="inferred from homology"/>
<feature type="chain" id="PRO_1000146014" description="tRNA N6-adenosine threonylcarbamoyltransferase">
    <location>
        <begin position="1"/>
        <end position="337"/>
    </location>
</feature>
<feature type="binding site" evidence="1">
    <location>
        <position position="111"/>
    </location>
    <ligand>
        <name>Fe cation</name>
        <dbReference type="ChEBI" id="CHEBI:24875"/>
    </ligand>
</feature>
<feature type="binding site" evidence="1">
    <location>
        <position position="115"/>
    </location>
    <ligand>
        <name>Fe cation</name>
        <dbReference type="ChEBI" id="CHEBI:24875"/>
    </ligand>
</feature>
<feature type="binding site" evidence="1">
    <location>
        <begin position="134"/>
        <end position="138"/>
    </location>
    <ligand>
        <name>substrate</name>
    </ligand>
</feature>
<feature type="binding site" evidence="1">
    <location>
        <position position="167"/>
    </location>
    <ligand>
        <name>substrate</name>
    </ligand>
</feature>
<feature type="binding site" evidence="1">
    <location>
        <position position="180"/>
    </location>
    <ligand>
        <name>substrate</name>
    </ligand>
</feature>
<feature type="binding site" evidence="1">
    <location>
        <position position="272"/>
    </location>
    <ligand>
        <name>substrate</name>
    </ligand>
</feature>
<feature type="binding site" evidence="1">
    <location>
        <position position="300"/>
    </location>
    <ligand>
        <name>Fe cation</name>
        <dbReference type="ChEBI" id="CHEBI:24875"/>
    </ligand>
</feature>
<comment type="function">
    <text evidence="1">Required for the formation of a threonylcarbamoyl group on adenosine at position 37 (t(6)A37) in tRNAs that read codons beginning with adenine. Is involved in the transfer of the threonylcarbamoyl moiety of threonylcarbamoyl-AMP (TC-AMP) to the N6 group of A37, together with TsaE and TsaB. TsaD likely plays a direct catalytic role in this reaction.</text>
</comment>
<comment type="catalytic activity">
    <reaction evidence="1">
        <text>L-threonylcarbamoyladenylate + adenosine(37) in tRNA = N(6)-L-threonylcarbamoyladenosine(37) in tRNA + AMP + H(+)</text>
        <dbReference type="Rhea" id="RHEA:37059"/>
        <dbReference type="Rhea" id="RHEA-COMP:10162"/>
        <dbReference type="Rhea" id="RHEA-COMP:10163"/>
        <dbReference type="ChEBI" id="CHEBI:15378"/>
        <dbReference type="ChEBI" id="CHEBI:73682"/>
        <dbReference type="ChEBI" id="CHEBI:74411"/>
        <dbReference type="ChEBI" id="CHEBI:74418"/>
        <dbReference type="ChEBI" id="CHEBI:456215"/>
        <dbReference type="EC" id="2.3.1.234"/>
    </reaction>
</comment>
<comment type="cofactor">
    <cofactor evidence="1">
        <name>Fe(2+)</name>
        <dbReference type="ChEBI" id="CHEBI:29033"/>
    </cofactor>
    <text evidence="1">Binds 1 Fe(2+) ion per subunit.</text>
</comment>
<comment type="subcellular location">
    <subcellularLocation>
        <location evidence="1">Cytoplasm</location>
    </subcellularLocation>
</comment>
<comment type="similarity">
    <text evidence="1">Belongs to the KAE1 / TsaD family.</text>
</comment>
<gene>
    <name evidence="1" type="primary">tsaD</name>
    <name type="synonym">gcp</name>
    <name type="ordered locus">SeAg_B3394</name>
</gene>
<reference key="1">
    <citation type="journal article" date="2011" name="J. Bacteriol.">
        <title>Comparative genomics of 28 Salmonella enterica isolates: evidence for CRISPR-mediated adaptive sublineage evolution.</title>
        <authorList>
            <person name="Fricke W.F."/>
            <person name="Mammel M.K."/>
            <person name="McDermott P.F."/>
            <person name="Tartera C."/>
            <person name="White D.G."/>
            <person name="Leclerc J.E."/>
            <person name="Ravel J."/>
            <person name="Cebula T.A."/>
        </authorList>
    </citation>
    <scope>NUCLEOTIDE SEQUENCE [LARGE SCALE GENOMIC DNA]</scope>
    <source>
        <strain>SL483</strain>
    </source>
</reference>
<accession>B5F6A4</accession>
<sequence length="337" mass="35940">MRVLGIETSCDETGIAIYDDKKGLLANQLYSQVKLHADYGGVVPELASRDHVRKTVPLIQAALKEAGLTASDIDAVAYTAGPGLVGALLVGATVGRSLAFAWNVPAIPVHHMEGHLLAPMLEDNPPEFPFVALLVSGGHTQLISVTGIGQYELLGESIDDAAGEAFDKTAKLLGLDYPGGPMLSKMASQGTAGRFVFPRPMTDRPGLDFSFSGLKTFAANTIRSNGGDEQTRADIARAFEDAVVDTLMIKCKRALESTGFKRLVMAGGVSANRTLRAKLAEMMQKRRGEVFYARPEFCTDNGAMIAYAGMVRFKAGVTADLGVTVRPRWPLAELPAA</sequence>
<name>TSAD_SALA4</name>
<protein>
    <recommendedName>
        <fullName evidence="1">tRNA N6-adenosine threonylcarbamoyltransferase</fullName>
        <ecNumber evidence="1">2.3.1.234</ecNumber>
    </recommendedName>
    <alternativeName>
        <fullName evidence="1">N6-L-threonylcarbamoyladenine synthase</fullName>
        <shortName evidence="1">t(6)A synthase</shortName>
    </alternativeName>
    <alternativeName>
        <fullName evidence="1">t(6)A37 threonylcarbamoyladenosine biosynthesis protein TsaD</fullName>
    </alternativeName>
    <alternativeName>
        <fullName evidence="1">tRNA threonylcarbamoyladenosine biosynthesis protein TsaD</fullName>
    </alternativeName>
</protein>
<organism>
    <name type="scientific">Salmonella agona (strain SL483)</name>
    <dbReference type="NCBI Taxonomy" id="454166"/>
    <lineage>
        <taxon>Bacteria</taxon>
        <taxon>Pseudomonadati</taxon>
        <taxon>Pseudomonadota</taxon>
        <taxon>Gammaproteobacteria</taxon>
        <taxon>Enterobacterales</taxon>
        <taxon>Enterobacteriaceae</taxon>
        <taxon>Salmonella</taxon>
    </lineage>
</organism>
<keyword id="KW-0012">Acyltransferase</keyword>
<keyword id="KW-0963">Cytoplasm</keyword>
<keyword id="KW-0408">Iron</keyword>
<keyword id="KW-0479">Metal-binding</keyword>
<keyword id="KW-0808">Transferase</keyword>
<keyword id="KW-0819">tRNA processing</keyword>
<evidence type="ECO:0000255" key="1">
    <source>
        <dbReference type="HAMAP-Rule" id="MF_01445"/>
    </source>
</evidence>